<proteinExistence type="inferred from homology"/>
<gene>
    <name evidence="1" type="primary">pheT</name>
    <name type="ordered locus">AM885</name>
</gene>
<sequence length="787" mass="85240">MRFAYSWLMDHLDTEWSASAVADELSRLGIEAELLHEGQDPAPFVVARVGAVKPHPSADKLKVCEVFDGADHMQVVCGASNVREGMLSVLARCGAVMPNGGPTIVEAVLRGVKSHGMLCSADELGVQGWRAQDSGILDLPSSDYEVGDSFFLSGAVIEVGVTPNRGDCLGLRGIARELVAAGVGALRPLPVADLEVFGRSPIEAEMRSAGVLMGRYIKSIKNTGDSPRWIKDRLISAGVKTISCVVDIVNYVMLVLNRPMHVYDADKIQGGKLVVGASSNTDFHALDGKKYTLSKDNLVVTDGAGVVHCIAGVIGSALSGCTLDSENIFLESAWYDPVDIAMSARKLKLSTDSSCRFERFTDPGCVKLGLDFASHMIVKYCGGVASDVVACGETPFSEGRVISFNPDSVGVIGSVEIEREEILRILTALGFDVNADKDRQWEVSVPSWRLADVRSSFDVVEEVLRMHGYDKVQEQPVVPCIAGPNGCNYDEKLSLIMLSAGLTEVVTWSFMSGAVAEKLGYSIEDLCVENPVSNKFDVMRPSLLPNLLQTAASNQACGCESVAIFELGEVYRFLDESERSICGVRSGDNVPRNPHGATRKFDFFDAKCDVLQVLTQLGIDGRLVEFRSCDRSYMHPARSADVYFRDILCGYVGELHPDLIGFFEMRSAAACFEIFLSRIPNVDDNPTGDEFLVHKYQPVKRDFAFVLDQGVQSQALVDVVGCIPGVAEVSVFDFYCGDNIPEGKVSIAVAVVMISKVGTMTESEIKDVSERIIALVAQKLGGELRAD</sequence>
<name>SYFB_ANAMM</name>
<evidence type="ECO:0000255" key="1">
    <source>
        <dbReference type="HAMAP-Rule" id="MF_00283"/>
    </source>
</evidence>
<protein>
    <recommendedName>
        <fullName evidence="1">Phenylalanine--tRNA ligase beta subunit</fullName>
        <ecNumber evidence="1">6.1.1.20</ecNumber>
    </recommendedName>
    <alternativeName>
        <fullName evidence="1">Phenylalanyl-tRNA synthetase beta subunit</fullName>
        <shortName evidence="1">PheRS</shortName>
    </alternativeName>
</protein>
<organism>
    <name type="scientific">Anaplasma marginale (strain St. Maries)</name>
    <dbReference type="NCBI Taxonomy" id="234826"/>
    <lineage>
        <taxon>Bacteria</taxon>
        <taxon>Pseudomonadati</taxon>
        <taxon>Pseudomonadota</taxon>
        <taxon>Alphaproteobacteria</taxon>
        <taxon>Rickettsiales</taxon>
        <taxon>Anaplasmataceae</taxon>
        <taxon>Anaplasma</taxon>
    </lineage>
</organism>
<keyword id="KW-0030">Aminoacyl-tRNA synthetase</keyword>
<keyword id="KW-0067">ATP-binding</keyword>
<keyword id="KW-0963">Cytoplasm</keyword>
<keyword id="KW-0436">Ligase</keyword>
<keyword id="KW-0460">Magnesium</keyword>
<keyword id="KW-0479">Metal-binding</keyword>
<keyword id="KW-0547">Nucleotide-binding</keyword>
<keyword id="KW-0648">Protein biosynthesis</keyword>
<keyword id="KW-0694">RNA-binding</keyword>
<keyword id="KW-0820">tRNA-binding</keyword>
<feature type="chain" id="PRO_0000126832" description="Phenylalanine--tRNA ligase beta subunit">
    <location>
        <begin position="1"/>
        <end position="787"/>
    </location>
</feature>
<feature type="domain" description="tRNA-binding" evidence="1">
    <location>
        <begin position="38"/>
        <end position="151"/>
    </location>
</feature>
<feature type="domain" description="B5" evidence="1">
    <location>
        <begin position="397"/>
        <end position="474"/>
    </location>
</feature>
<feature type="domain" description="FDX-ACB" evidence="1">
    <location>
        <begin position="694"/>
        <end position="785"/>
    </location>
</feature>
<feature type="binding site" evidence="1">
    <location>
        <position position="452"/>
    </location>
    <ligand>
        <name>Mg(2+)</name>
        <dbReference type="ChEBI" id="CHEBI:18420"/>
        <note>shared with alpha subunit</note>
    </ligand>
</feature>
<feature type="binding site" evidence="1">
    <location>
        <position position="458"/>
    </location>
    <ligand>
        <name>Mg(2+)</name>
        <dbReference type="ChEBI" id="CHEBI:18420"/>
        <note>shared with alpha subunit</note>
    </ligand>
</feature>
<feature type="binding site" evidence="1">
    <location>
        <position position="461"/>
    </location>
    <ligand>
        <name>Mg(2+)</name>
        <dbReference type="ChEBI" id="CHEBI:18420"/>
        <note>shared with alpha subunit</note>
    </ligand>
</feature>
<feature type="binding site" evidence="1">
    <location>
        <position position="462"/>
    </location>
    <ligand>
        <name>Mg(2+)</name>
        <dbReference type="ChEBI" id="CHEBI:18420"/>
        <note>shared with alpha subunit</note>
    </ligand>
</feature>
<dbReference type="EC" id="6.1.1.20" evidence="1"/>
<dbReference type="EMBL" id="CP000030">
    <property type="protein sequence ID" value="AAV86797.1"/>
    <property type="molecule type" value="Genomic_DNA"/>
</dbReference>
<dbReference type="RefSeq" id="WP_011114480.1">
    <property type="nucleotide sequence ID" value="NC_004842.2"/>
</dbReference>
<dbReference type="SMR" id="Q5PA83"/>
<dbReference type="KEGG" id="ama:AM885"/>
<dbReference type="HOGENOM" id="CLU_016891_0_0_5"/>
<dbReference type="GO" id="GO:0009328">
    <property type="term" value="C:phenylalanine-tRNA ligase complex"/>
    <property type="evidence" value="ECO:0007669"/>
    <property type="project" value="TreeGrafter"/>
</dbReference>
<dbReference type="GO" id="GO:0005524">
    <property type="term" value="F:ATP binding"/>
    <property type="evidence" value="ECO:0007669"/>
    <property type="project" value="UniProtKB-UniRule"/>
</dbReference>
<dbReference type="GO" id="GO:0000287">
    <property type="term" value="F:magnesium ion binding"/>
    <property type="evidence" value="ECO:0007669"/>
    <property type="project" value="UniProtKB-UniRule"/>
</dbReference>
<dbReference type="GO" id="GO:0004826">
    <property type="term" value="F:phenylalanine-tRNA ligase activity"/>
    <property type="evidence" value="ECO:0007669"/>
    <property type="project" value="UniProtKB-UniRule"/>
</dbReference>
<dbReference type="GO" id="GO:0000049">
    <property type="term" value="F:tRNA binding"/>
    <property type="evidence" value="ECO:0007669"/>
    <property type="project" value="UniProtKB-KW"/>
</dbReference>
<dbReference type="GO" id="GO:0006432">
    <property type="term" value="P:phenylalanyl-tRNA aminoacylation"/>
    <property type="evidence" value="ECO:0007669"/>
    <property type="project" value="UniProtKB-UniRule"/>
</dbReference>
<dbReference type="CDD" id="cd00769">
    <property type="entry name" value="PheRS_beta_core"/>
    <property type="match status" value="1"/>
</dbReference>
<dbReference type="CDD" id="cd02796">
    <property type="entry name" value="tRNA_bind_bactPheRS"/>
    <property type="match status" value="1"/>
</dbReference>
<dbReference type="Gene3D" id="3.30.56.10">
    <property type="match status" value="2"/>
</dbReference>
<dbReference type="Gene3D" id="3.30.930.10">
    <property type="entry name" value="Bira Bifunctional Protein, Domain 2"/>
    <property type="match status" value="1"/>
</dbReference>
<dbReference type="Gene3D" id="3.30.70.380">
    <property type="entry name" value="Ferrodoxin-fold anticodon-binding domain"/>
    <property type="match status" value="1"/>
</dbReference>
<dbReference type="Gene3D" id="2.40.50.140">
    <property type="entry name" value="Nucleic acid-binding proteins"/>
    <property type="match status" value="1"/>
</dbReference>
<dbReference type="Gene3D" id="3.50.40.10">
    <property type="entry name" value="Phenylalanyl-trna Synthetase, Chain B, domain 3"/>
    <property type="match status" value="1"/>
</dbReference>
<dbReference type="HAMAP" id="MF_00283">
    <property type="entry name" value="Phe_tRNA_synth_beta1"/>
    <property type="match status" value="1"/>
</dbReference>
<dbReference type="InterPro" id="IPR045864">
    <property type="entry name" value="aa-tRNA-synth_II/BPL/LPL"/>
</dbReference>
<dbReference type="InterPro" id="IPR005146">
    <property type="entry name" value="B3/B4_tRNA-bd"/>
</dbReference>
<dbReference type="InterPro" id="IPR009061">
    <property type="entry name" value="DNA-bd_dom_put_sf"/>
</dbReference>
<dbReference type="InterPro" id="IPR005121">
    <property type="entry name" value="Fdx_antiC-bd"/>
</dbReference>
<dbReference type="InterPro" id="IPR036690">
    <property type="entry name" value="Fdx_antiC-bd_sf"/>
</dbReference>
<dbReference type="InterPro" id="IPR012340">
    <property type="entry name" value="NA-bd_OB-fold"/>
</dbReference>
<dbReference type="InterPro" id="IPR045060">
    <property type="entry name" value="Phe-tRNA-ligase_IIc_bsu"/>
</dbReference>
<dbReference type="InterPro" id="IPR004532">
    <property type="entry name" value="Phe-tRNA-ligase_IIc_bsu_bact"/>
</dbReference>
<dbReference type="InterPro" id="IPR020825">
    <property type="entry name" value="Phe-tRNA_synthase-like_B3/B4"/>
</dbReference>
<dbReference type="InterPro" id="IPR041616">
    <property type="entry name" value="PheRS_beta_core"/>
</dbReference>
<dbReference type="InterPro" id="IPR002547">
    <property type="entry name" value="tRNA-bd_dom"/>
</dbReference>
<dbReference type="InterPro" id="IPR033714">
    <property type="entry name" value="tRNA_bind_bactPheRS"/>
</dbReference>
<dbReference type="InterPro" id="IPR005147">
    <property type="entry name" value="tRNA_synthase_B5-dom"/>
</dbReference>
<dbReference type="NCBIfam" id="TIGR00472">
    <property type="entry name" value="pheT_bact"/>
    <property type="match status" value="1"/>
</dbReference>
<dbReference type="NCBIfam" id="NF045760">
    <property type="entry name" value="YtpR"/>
    <property type="match status" value="1"/>
</dbReference>
<dbReference type="PANTHER" id="PTHR10947:SF0">
    <property type="entry name" value="PHENYLALANINE--TRNA LIGASE BETA SUBUNIT"/>
    <property type="match status" value="1"/>
</dbReference>
<dbReference type="PANTHER" id="PTHR10947">
    <property type="entry name" value="PHENYLALANYL-TRNA SYNTHETASE BETA CHAIN AND LEUCINE-RICH REPEAT-CONTAINING PROTEIN 47"/>
    <property type="match status" value="1"/>
</dbReference>
<dbReference type="Pfam" id="PF03483">
    <property type="entry name" value="B3_4"/>
    <property type="match status" value="1"/>
</dbReference>
<dbReference type="Pfam" id="PF03484">
    <property type="entry name" value="B5"/>
    <property type="match status" value="1"/>
</dbReference>
<dbReference type="Pfam" id="PF03147">
    <property type="entry name" value="FDX-ACB"/>
    <property type="match status" value="1"/>
</dbReference>
<dbReference type="Pfam" id="PF01588">
    <property type="entry name" value="tRNA_bind"/>
    <property type="match status" value="1"/>
</dbReference>
<dbReference type="Pfam" id="PF17759">
    <property type="entry name" value="tRNA_synthFbeta"/>
    <property type="match status" value="1"/>
</dbReference>
<dbReference type="SMART" id="SM00873">
    <property type="entry name" value="B3_4"/>
    <property type="match status" value="1"/>
</dbReference>
<dbReference type="SMART" id="SM00874">
    <property type="entry name" value="B5"/>
    <property type="match status" value="1"/>
</dbReference>
<dbReference type="SMART" id="SM00896">
    <property type="entry name" value="FDX-ACB"/>
    <property type="match status" value="1"/>
</dbReference>
<dbReference type="SUPFAM" id="SSF54991">
    <property type="entry name" value="Anticodon-binding domain of PheRS"/>
    <property type="match status" value="1"/>
</dbReference>
<dbReference type="SUPFAM" id="SSF55681">
    <property type="entry name" value="Class II aaRS and biotin synthetases"/>
    <property type="match status" value="1"/>
</dbReference>
<dbReference type="SUPFAM" id="SSF50249">
    <property type="entry name" value="Nucleic acid-binding proteins"/>
    <property type="match status" value="1"/>
</dbReference>
<dbReference type="SUPFAM" id="SSF56037">
    <property type="entry name" value="PheT/TilS domain"/>
    <property type="match status" value="1"/>
</dbReference>
<dbReference type="SUPFAM" id="SSF46955">
    <property type="entry name" value="Putative DNA-binding domain"/>
    <property type="match status" value="1"/>
</dbReference>
<dbReference type="PROSITE" id="PS51483">
    <property type="entry name" value="B5"/>
    <property type="match status" value="1"/>
</dbReference>
<dbReference type="PROSITE" id="PS51447">
    <property type="entry name" value="FDX_ACB"/>
    <property type="match status" value="1"/>
</dbReference>
<dbReference type="PROSITE" id="PS50886">
    <property type="entry name" value="TRBD"/>
    <property type="match status" value="1"/>
</dbReference>
<reference key="1">
    <citation type="journal article" date="2005" name="Proc. Natl. Acad. Sci. U.S.A.">
        <title>Complete genome sequencing of Anaplasma marginale reveals that the surface is skewed to two superfamilies of outer membrane proteins.</title>
        <authorList>
            <person name="Brayton K.A."/>
            <person name="Kappmeyer L.S."/>
            <person name="Herndon D.R."/>
            <person name="Dark M.J."/>
            <person name="Tibbals D.L."/>
            <person name="Palmer G.H."/>
            <person name="McGuire T.C."/>
            <person name="Knowles D.P. Jr."/>
        </authorList>
    </citation>
    <scope>NUCLEOTIDE SEQUENCE [LARGE SCALE GENOMIC DNA]</scope>
    <source>
        <strain>St. Maries</strain>
    </source>
</reference>
<comment type="catalytic activity">
    <reaction evidence="1">
        <text>tRNA(Phe) + L-phenylalanine + ATP = L-phenylalanyl-tRNA(Phe) + AMP + diphosphate + H(+)</text>
        <dbReference type="Rhea" id="RHEA:19413"/>
        <dbReference type="Rhea" id="RHEA-COMP:9668"/>
        <dbReference type="Rhea" id="RHEA-COMP:9699"/>
        <dbReference type="ChEBI" id="CHEBI:15378"/>
        <dbReference type="ChEBI" id="CHEBI:30616"/>
        <dbReference type="ChEBI" id="CHEBI:33019"/>
        <dbReference type="ChEBI" id="CHEBI:58095"/>
        <dbReference type="ChEBI" id="CHEBI:78442"/>
        <dbReference type="ChEBI" id="CHEBI:78531"/>
        <dbReference type="ChEBI" id="CHEBI:456215"/>
        <dbReference type="EC" id="6.1.1.20"/>
    </reaction>
</comment>
<comment type="cofactor">
    <cofactor evidence="1">
        <name>Mg(2+)</name>
        <dbReference type="ChEBI" id="CHEBI:18420"/>
    </cofactor>
    <text evidence="1">Binds 2 magnesium ions per tetramer.</text>
</comment>
<comment type="subunit">
    <text evidence="1">Tetramer of two alpha and two beta subunits.</text>
</comment>
<comment type="subcellular location">
    <subcellularLocation>
        <location evidence="1">Cytoplasm</location>
    </subcellularLocation>
</comment>
<comment type="similarity">
    <text evidence="1">Belongs to the phenylalanyl-tRNA synthetase beta subunit family. Type 1 subfamily.</text>
</comment>
<accession>Q5PA83</accession>